<comment type="catalytic activity">
    <reaction evidence="1">
        <text>(6S)-5,6,7,8-tetrahydrofolate + formate + ATP = (6R)-10-formyltetrahydrofolate + ADP + phosphate</text>
        <dbReference type="Rhea" id="RHEA:20221"/>
        <dbReference type="ChEBI" id="CHEBI:15740"/>
        <dbReference type="ChEBI" id="CHEBI:30616"/>
        <dbReference type="ChEBI" id="CHEBI:43474"/>
        <dbReference type="ChEBI" id="CHEBI:57453"/>
        <dbReference type="ChEBI" id="CHEBI:195366"/>
        <dbReference type="ChEBI" id="CHEBI:456216"/>
        <dbReference type="EC" id="6.3.4.3"/>
    </reaction>
</comment>
<comment type="pathway">
    <text evidence="1">One-carbon metabolism; tetrahydrofolate interconversion.</text>
</comment>
<comment type="similarity">
    <text evidence="1">Belongs to the formate--tetrahydrofolate ligase family.</text>
</comment>
<feature type="chain" id="PRO_1000196825" description="Formate--tetrahydrofolate ligase">
    <location>
        <begin position="1"/>
        <end position="556"/>
    </location>
</feature>
<feature type="binding site" evidence="1">
    <location>
        <begin position="65"/>
        <end position="72"/>
    </location>
    <ligand>
        <name>ATP</name>
        <dbReference type="ChEBI" id="CHEBI:30616"/>
    </ligand>
</feature>
<gene>
    <name evidence="1" type="primary">fhs</name>
    <name type="ordered locus">Sez_0945</name>
</gene>
<name>FTHS_STREM</name>
<protein>
    <recommendedName>
        <fullName evidence="1">Formate--tetrahydrofolate ligase</fullName>
        <ecNumber evidence="1">6.3.4.3</ecNumber>
    </recommendedName>
    <alternativeName>
        <fullName evidence="1">Formyltetrahydrofolate synthetase</fullName>
        <shortName evidence="1">FHS</shortName>
        <shortName evidence="1">FTHFS</shortName>
    </alternativeName>
</protein>
<keyword id="KW-0067">ATP-binding</keyword>
<keyword id="KW-0436">Ligase</keyword>
<keyword id="KW-0547">Nucleotide-binding</keyword>
<keyword id="KW-0554">One-carbon metabolism</keyword>
<sequence>MKSDIEIAQSVPLKPITEIVKKVGIDGDDLELYGNYKAKLSFEKIKSVKGNKPGKLILVTAINPTPAGEGKSTMSIGLADALTKIGKKTMLALREPSLGPVMGIKGGAAGGGYAQVLPMEDINLHFTGDMHAITTAHNALSALIDNHLQQGNELGIDPRRIIWKRVLDLNDRSLRQVIVGLGSPVNGVPREDGFDITVASEVMAILCLATDLKDLKARLANIVIAYRYDKSPVYVRDLKVEGALALILKDAIKPNLVQTIYGTPAFVHGGPFANIAHGCNSVLATSTALRLADYTVTEAGFGADLGAEKFLNIKTPNLPKAPDAVVIVATLRALKMHGGVAKADLTFENTAAVRSGFANLKRHVENIRKFNIPVVVAINEFVTDTKAEIQVLKELCAEIAVPVELASVWAKGADGGIALANAVVSAIAEESAAYKRLYADKDSLEEKLRAIVTEIYGGRTVQFGPKAKNQLKQFAQYGWDQLPVCMAKTQYSFSDDPSLLGAPDQFDITIRELVPKTGAGFIVALTGDVMTMPGLPKIPAAMKMDVTEDGTAVGLF</sequence>
<dbReference type="EC" id="6.3.4.3" evidence="1"/>
<dbReference type="EMBL" id="CP001129">
    <property type="protein sequence ID" value="ACG62303.1"/>
    <property type="molecule type" value="Genomic_DNA"/>
</dbReference>
<dbReference type="RefSeq" id="WP_012515574.1">
    <property type="nucleotide sequence ID" value="NC_011134.1"/>
</dbReference>
<dbReference type="SMR" id="B4U2T6"/>
<dbReference type="KEGG" id="sez:Sez_0945"/>
<dbReference type="HOGENOM" id="CLU_003601_3_3_9"/>
<dbReference type="UniPathway" id="UPA00193"/>
<dbReference type="Proteomes" id="UP000001873">
    <property type="component" value="Chromosome"/>
</dbReference>
<dbReference type="GO" id="GO:0005524">
    <property type="term" value="F:ATP binding"/>
    <property type="evidence" value="ECO:0007669"/>
    <property type="project" value="UniProtKB-UniRule"/>
</dbReference>
<dbReference type="GO" id="GO:0004329">
    <property type="term" value="F:formate-tetrahydrofolate ligase activity"/>
    <property type="evidence" value="ECO:0007669"/>
    <property type="project" value="UniProtKB-UniRule"/>
</dbReference>
<dbReference type="GO" id="GO:0035999">
    <property type="term" value="P:tetrahydrofolate interconversion"/>
    <property type="evidence" value="ECO:0007669"/>
    <property type="project" value="UniProtKB-UniRule"/>
</dbReference>
<dbReference type="CDD" id="cd00477">
    <property type="entry name" value="FTHFS"/>
    <property type="match status" value="1"/>
</dbReference>
<dbReference type="FunFam" id="3.30.1510.10:FF:000001">
    <property type="entry name" value="Formate--tetrahydrofolate ligase"/>
    <property type="match status" value="1"/>
</dbReference>
<dbReference type="FunFam" id="3.10.410.10:FF:000001">
    <property type="entry name" value="Putative formate--tetrahydrofolate ligase"/>
    <property type="match status" value="1"/>
</dbReference>
<dbReference type="Gene3D" id="3.30.1510.10">
    <property type="entry name" value="Domain 2, N(10)-formyltetrahydrofolate synthetase"/>
    <property type="match status" value="1"/>
</dbReference>
<dbReference type="Gene3D" id="3.10.410.10">
    <property type="entry name" value="Formyltetrahydrofolate synthetase, domain 3"/>
    <property type="match status" value="1"/>
</dbReference>
<dbReference type="Gene3D" id="3.40.50.300">
    <property type="entry name" value="P-loop containing nucleotide triphosphate hydrolases"/>
    <property type="match status" value="1"/>
</dbReference>
<dbReference type="HAMAP" id="MF_01543">
    <property type="entry name" value="FTHFS"/>
    <property type="match status" value="1"/>
</dbReference>
<dbReference type="InterPro" id="IPR000559">
    <property type="entry name" value="Formate_THF_ligase"/>
</dbReference>
<dbReference type="InterPro" id="IPR020628">
    <property type="entry name" value="Formate_THF_ligase_CS"/>
</dbReference>
<dbReference type="InterPro" id="IPR027417">
    <property type="entry name" value="P-loop_NTPase"/>
</dbReference>
<dbReference type="NCBIfam" id="NF010030">
    <property type="entry name" value="PRK13505.1"/>
    <property type="match status" value="1"/>
</dbReference>
<dbReference type="Pfam" id="PF01268">
    <property type="entry name" value="FTHFS"/>
    <property type="match status" value="1"/>
</dbReference>
<dbReference type="SUPFAM" id="SSF52540">
    <property type="entry name" value="P-loop containing nucleoside triphosphate hydrolases"/>
    <property type="match status" value="1"/>
</dbReference>
<dbReference type="PROSITE" id="PS00721">
    <property type="entry name" value="FTHFS_1"/>
    <property type="match status" value="1"/>
</dbReference>
<dbReference type="PROSITE" id="PS00722">
    <property type="entry name" value="FTHFS_2"/>
    <property type="match status" value="1"/>
</dbReference>
<reference key="1">
    <citation type="journal article" date="2008" name="PLoS ONE">
        <title>Genome sequence of a lancefield group C Streptococcus zooepidemicus strain causing epidemic nephritis: new information about an old disease.</title>
        <authorList>
            <person name="Beres S.B."/>
            <person name="Sesso R."/>
            <person name="Pinto S.W.L."/>
            <person name="Hoe N.P."/>
            <person name="Porcella S.F."/>
            <person name="Deleo F.R."/>
            <person name="Musser J.M."/>
        </authorList>
    </citation>
    <scope>NUCLEOTIDE SEQUENCE [LARGE SCALE GENOMIC DNA]</scope>
    <source>
        <strain>MGCS10565</strain>
    </source>
</reference>
<accession>B4U2T6</accession>
<organism>
    <name type="scientific">Streptococcus equi subsp. zooepidemicus (strain MGCS10565)</name>
    <dbReference type="NCBI Taxonomy" id="552526"/>
    <lineage>
        <taxon>Bacteria</taxon>
        <taxon>Bacillati</taxon>
        <taxon>Bacillota</taxon>
        <taxon>Bacilli</taxon>
        <taxon>Lactobacillales</taxon>
        <taxon>Streptococcaceae</taxon>
        <taxon>Streptococcus</taxon>
    </lineage>
</organism>
<evidence type="ECO:0000255" key="1">
    <source>
        <dbReference type="HAMAP-Rule" id="MF_01543"/>
    </source>
</evidence>
<proteinExistence type="inferred from homology"/>